<proteinExistence type="inferred from homology"/>
<comment type="function">
    <text evidence="1">Plays an important role in the de novo pathway of purine nucleotide biosynthesis. Catalyzes the first committed step in the biosynthesis of AMP from IMP.</text>
</comment>
<comment type="catalytic activity">
    <reaction evidence="1">
        <text>IMP + L-aspartate + GTP = N(6)-(1,2-dicarboxyethyl)-AMP + GDP + phosphate + 2 H(+)</text>
        <dbReference type="Rhea" id="RHEA:15753"/>
        <dbReference type="ChEBI" id="CHEBI:15378"/>
        <dbReference type="ChEBI" id="CHEBI:29991"/>
        <dbReference type="ChEBI" id="CHEBI:37565"/>
        <dbReference type="ChEBI" id="CHEBI:43474"/>
        <dbReference type="ChEBI" id="CHEBI:57567"/>
        <dbReference type="ChEBI" id="CHEBI:58053"/>
        <dbReference type="ChEBI" id="CHEBI:58189"/>
        <dbReference type="EC" id="6.3.4.4"/>
    </reaction>
</comment>
<comment type="cofactor">
    <cofactor evidence="1">
        <name>Mg(2+)</name>
        <dbReference type="ChEBI" id="CHEBI:18420"/>
    </cofactor>
    <text evidence="1">Binds 1 Mg(2+) ion per subunit.</text>
</comment>
<comment type="pathway">
    <text evidence="1">Purine metabolism; AMP biosynthesis via de novo pathway; AMP from IMP: step 1/2.</text>
</comment>
<comment type="subunit">
    <text evidence="1">Homodimer.</text>
</comment>
<comment type="subcellular location">
    <subcellularLocation>
        <location evidence="1">Cytoplasm</location>
    </subcellularLocation>
</comment>
<comment type="similarity">
    <text evidence="1">Belongs to the adenylosuccinate synthetase family.</text>
</comment>
<feature type="chain" id="PRO_1000089281" description="Adenylosuccinate synthetase">
    <location>
        <begin position="1"/>
        <end position="428"/>
    </location>
</feature>
<feature type="active site" description="Proton acceptor" evidence="1">
    <location>
        <position position="13"/>
    </location>
</feature>
<feature type="active site" description="Proton donor" evidence="1">
    <location>
        <position position="41"/>
    </location>
</feature>
<feature type="binding site" evidence="1">
    <location>
        <begin position="12"/>
        <end position="18"/>
    </location>
    <ligand>
        <name>GTP</name>
        <dbReference type="ChEBI" id="CHEBI:37565"/>
    </ligand>
</feature>
<feature type="binding site" description="in other chain" evidence="1">
    <location>
        <begin position="13"/>
        <end position="16"/>
    </location>
    <ligand>
        <name>IMP</name>
        <dbReference type="ChEBI" id="CHEBI:58053"/>
        <note>ligand shared between dimeric partners</note>
    </ligand>
</feature>
<feature type="binding site" evidence="1">
    <location>
        <position position="13"/>
    </location>
    <ligand>
        <name>Mg(2+)</name>
        <dbReference type="ChEBI" id="CHEBI:18420"/>
    </ligand>
</feature>
<feature type="binding site" description="in other chain" evidence="1">
    <location>
        <begin position="38"/>
        <end position="41"/>
    </location>
    <ligand>
        <name>IMP</name>
        <dbReference type="ChEBI" id="CHEBI:58053"/>
        <note>ligand shared between dimeric partners</note>
    </ligand>
</feature>
<feature type="binding site" evidence="1">
    <location>
        <begin position="40"/>
        <end position="42"/>
    </location>
    <ligand>
        <name>GTP</name>
        <dbReference type="ChEBI" id="CHEBI:37565"/>
    </ligand>
</feature>
<feature type="binding site" evidence="1">
    <location>
        <position position="40"/>
    </location>
    <ligand>
        <name>Mg(2+)</name>
        <dbReference type="ChEBI" id="CHEBI:18420"/>
    </ligand>
</feature>
<feature type="binding site" description="in other chain" evidence="1">
    <location>
        <position position="130"/>
    </location>
    <ligand>
        <name>IMP</name>
        <dbReference type="ChEBI" id="CHEBI:58053"/>
        <note>ligand shared between dimeric partners</note>
    </ligand>
</feature>
<feature type="binding site" evidence="1">
    <location>
        <position position="144"/>
    </location>
    <ligand>
        <name>IMP</name>
        <dbReference type="ChEBI" id="CHEBI:58053"/>
        <note>ligand shared between dimeric partners</note>
    </ligand>
</feature>
<feature type="binding site" description="in other chain" evidence="1">
    <location>
        <position position="225"/>
    </location>
    <ligand>
        <name>IMP</name>
        <dbReference type="ChEBI" id="CHEBI:58053"/>
        <note>ligand shared between dimeric partners</note>
    </ligand>
</feature>
<feature type="binding site" description="in other chain" evidence="1">
    <location>
        <position position="240"/>
    </location>
    <ligand>
        <name>IMP</name>
        <dbReference type="ChEBI" id="CHEBI:58053"/>
        <note>ligand shared between dimeric partners</note>
    </ligand>
</feature>
<feature type="binding site" evidence="1">
    <location>
        <begin position="300"/>
        <end position="306"/>
    </location>
    <ligand>
        <name>substrate</name>
    </ligand>
</feature>
<feature type="binding site" description="in other chain" evidence="1">
    <location>
        <position position="304"/>
    </location>
    <ligand>
        <name>IMP</name>
        <dbReference type="ChEBI" id="CHEBI:58053"/>
        <note>ligand shared between dimeric partners</note>
    </ligand>
</feature>
<feature type="binding site" evidence="1">
    <location>
        <position position="306"/>
    </location>
    <ligand>
        <name>GTP</name>
        <dbReference type="ChEBI" id="CHEBI:37565"/>
    </ligand>
</feature>
<feature type="binding site" evidence="1">
    <location>
        <begin position="332"/>
        <end position="334"/>
    </location>
    <ligand>
        <name>GTP</name>
        <dbReference type="ChEBI" id="CHEBI:37565"/>
    </ligand>
</feature>
<feature type="binding site" evidence="1">
    <location>
        <begin position="414"/>
        <end position="416"/>
    </location>
    <ligand>
        <name>GTP</name>
        <dbReference type="ChEBI" id="CHEBI:37565"/>
    </ligand>
</feature>
<accession>B1KU85</accession>
<dbReference type="EC" id="6.3.4.4" evidence="1"/>
<dbReference type="EMBL" id="CP000962">
    <property type="protein sequence ID" value="ACA55374.1"/>
    <property type="molecule type" value="Genomic_DNA"/>
</dbReference>
<dbReference type="RefSeq" id="WP_012343365.1">
    <property type="nucleotide sequence ID" value="NC_010520.1"/>
</dbReference>
<dbReference type="SMR" id="B1KU85"/>
<dbReference type="KEGG" id="cbl:CLK_3100"/>
<dbReference type="HOGENOM" id="CLU_029848_0_0_9"/>
<dbReference type="UniPathway" id="UPA00075">
    <property type="reaction ID" value="UER00335"/>
</dbReference>
<dbReference type="GO" id="GO:0005737">
    <property type="term" value="C:cytoplasm"/>
    <property type="evidence" value="ECO:0007669"/>
    <property type="project" value="UniProtKB-SubCell"/>
</dbReference>
<dbReference type="GO" id="GO:0004019">
    <property type="term" value="F:adenylosuccinate synthase activity"/>
    <property type="evidence" value="ECO:0007669"/>
    <property type="project" value="UniProtKB-UniRule"/>
</dbReference>
<dbReference type="GO" id="GO:0005525">
    <property type="term" value="F:GTP binding"/>
    <property type="evidence" value="ECO:0007669"/>
    <property type="project" value="UniProtKB-UniRule"/>
</dbReference>
<dbReference type="GO" id="GO:0000287">
    <property type="term" value="F:magnesium ion binding"/>
    <property type="evidence" value="ECO:0007669"/>
    <property type="project" value="UniProtKB-UniRule"/>
</dbReference>
<dbReference type="GO" id="GO:0044208">
    <property type="term" value="P:'de novo' AMP biosynthetic process"/>
    <property type="evidence" value="ECO:0007669"/>
    <property type="project" value="UniProtKB-UniRule"/>
</dbReference>
<dbReference type="GO" id="GO:0046040">
    <property type="term" value="P:IMP metabolic process"/>
    <property type="evidence" value="ECO:0007669"/>
    <property type="project" value="TreeGrafter"/>
</dbReference>
<dbReference type="CDD" id="cd03108">
    <property type="entry name" value="AdSS"/>
    <property type="match status" value="1"/>
</dbReference>
<dbReference type="FunFam" id="1.10.300.10:FF:000001">
    <property type="entry name" value="Adenylosuccinate synthetase"/>
    <property type="match status" value="1"/>
</dbReference>
<dbReference type="FunFam" id="3.90.170.10:FF:000001">
    <property type="entry name" value="Adenylosuccinate synthetase"/>
    <property type="match status" value="1"/>
</dbReference>
<dbReference type="Gene3D" id="3.40.440.10">
    <property type="entry name" value="Adenylosuccinate Synthetase, subunit A, domain 1"/>
    <property type="match status" value="1"/>
</dbReference>
<dbReference type="Gene3D" id="1.10.300.10">
    <property type="entry name" value="Adenylosuccinate Synthetase, subunit A, domain 2"/>
    <property type="match status" value="1"/>
</dbReference>
<dbReference type="Gene3D" id="3.90.170.10">
    <property type="entry name" value="Adenylosuccinate Synthetase, subunit A, domain 3"/>
    <property type="match status" value="1"/>
</dbReference>
<dbReference type="HAMAP" id="MF_00011">
    <property type="entry name" value="Adenylosucc_synth"/>
    <property type="match status" value="1"/>
</dbReference>
<dbReference type="InterPro" id="IPR018220">
    <property type="entry name" value="Adenylosuccin_syn_GTP-bd"/>
</dbReference>
<dbReference type="InterPro" id="IPR033128">
    <property type="entry name" value="Adenylosuccin_syn_Lys_AS"/>
</dbReference>
<dbReference type="InterPro" id="IPR042109">
    <property type="entry name" value="Adenylosuccinate_synth_dom1"/>
</dbReference>
<dbReference type="InterPro" id="IPR042110">
    <property type="entry name" value="Adenylosuccinate_synth_dom2"/>
</dbReference>
<dbReference type="InterPro" id="IPR042111">
    <property type="entry name" value="Adenylosuccinate_synth_dom3"/>
</dbReference>
<dbReference type="InterPro" id="IPR001114">
    <property type="entry name" value="Adenylosuccinate_synthetase"/>
</dbReference>
<dbReference type="InterPro" id="IPR027417">
    <property type="entry name" value="P-loop_NTPase"/>
</dbReference>
<dbReference type="NCBIfam" id="NF002223">
    <property type="entry name" value="PRK01117.1"/>
    <property type="match status" value="1"/>
</dbReference>
<dbReference type="NCBIfam" id="TIGR00184">
    <property type="entry name" value="purA"/>
    <property type="match status" value="1"/>
</dbReference>
<dbReference type="PANTHER" id="PTHR11846">
    <property type="entry name" value="ADENYLOSUCCINATE SYNTHETASE"/>
    <property type="match status" value="1"/>
</dbReference>
<dbReference type="PANTHER" id="PTHR11846:SF0">
    <property type="entry name" value="ADENYLOSUCCINATE SYNTHETASE"/>
    <property type="match status" value="1"/>
</dbReference>
<dbReference type="Pfam" id="PF00709">
    <property type="entry name" value="Adenylsucc_synt"/>
    <property type="match status" value="1"/>
</dbReference>
<dbReference type="SMART" id="SM00788">
    <property type="entry name" value="Adenylsucc_synt"/>
    <property type="match status" value="1"/>
</dbReference>
<dbReference type="SUPFAM" id="SSF52540">
    <property type="entry name" value="P-loop containing nucleoside triphosphate hydrolases"/>
    <property type="match status" value="1"/>
</dbReference>
<dbReference type="PROSITE" id="PS01266">
    <property type="entry name" value="ADENYLOSUCCIN_SYN_1"/>
    <property type="match status" value="1"/>
</dbReference>
<dbReference type="PROSITE" id="PS00513">
    <property type="entry name" value="ADENYLOSUCCIN_SYN_2"/>
    <property type="match status" value="1"/>
</dbReference>
<evidence type="ECO:0000255" key="1">
    <source>
        <dbReference type="HAMAP-Rule" id="MF_00011"/>
    </source>
</evidence>
<gene>
    <name evidence="1" type="primary">purA</name>
    <name type="ordered locus">CLK_3100</name>
</gene>
<protein>
    <recommendedName>
        <fullName evidence="1">Adenylosuccinate synthetase</fullName>
        <shortName evidence="1">AMPSase</shortName>
        <shortName evidence="1">AdSS</shortName>
        <ecNumber evidence="1">6.3.4.4</ecNumber>
    </recommendedName>
    <alternativeName>
        <fullName evidence="1">IMP--aspartate ligase</fullName>
    </alternativeName>
</protein>
<reference key="1">
    <citation type="journal article" date="2007" name="PLoS ONE">
        <title>Analysis of the neurotoxin complex genes in Clostridium botulinum A1-A4 and B1 strains: BoNT/A3, /Ba4 and /B1 clusters are located within plasmids.</title>
        <authorList>
            <person name="Smith T.J."/>
            <person name="Hill K.K."/>
            <person name="Foley B.T."/>
            <person name="Detter J.C."/>
            <person name="Munk A.C."/>
            <person name="Bruce D.C."/>
            <person name="Doggett N.A."/>
            <person name="Smith L.A."/>
            <person name="Marks J.D."/>
            <person name="Xie G."/>
            <person name="Brettin T.S."/>
        </authorList>
    </citation>
    <scope>NUCLEOTIDE SEQUENCE [LARGE SCALE GENOMIC DNA]</scope>
    <source>
        <strain>Loch Maree / Type A3</strain>
    </source>
</reference>
<name>PURA_CLOBM</name>
<organism>
    <name type="scientific">Clostridium botulinum (strain Loch Maree / Type A3)</name>
    <dbReference type="NCBI Taxonomy" id="498214"/>
    <lineage>
        <taxon>Bacteria</taxon>
        <taxon>Bacillati</taxon>
        <taxon>Bacillota</taxon>
        <taxon>Clostridia</taxon>
        <taxon>Eubacteriales</taxon>
        <taxon>Clostridiaceae</taxon>
        <taxon>Clostridium</taxon>
    </lineage>
</organism>
<sequence length="428" mass="47153">MSAFIVLGAQWGDEGKGKMTDYLAENADVVVRFQGGNNAGHTVVVGEKEYKLHLIPSGILYNDKLNVIGNGVVLDPKALFEEINYLESLGVEITPDRLIISDRAHVIMPYHRILDGIKERARGNKDIGTTGKGIGPSYTDKMERSGIRVCDLIHKEVFEENLKETLEVKNKIITEVFGGEALDYNEIYNEYLGYAEKLRPFVKDISVIVNKKIKDGKEVLFEGAQGTLLDIDYGTYPYVTSSSTIAGGVCIGAGVGPTAITNAVGIAKAYTTRVGKGPFPTELLDRTGDWVREKGHEFGVTTGRARRCGWLDLVILKTSARISGLTSFAVTKIDTLAGLDTLKVCTGYRLNGEIIDYVPASLEDLAKCKPIYEEFQGWDDSIANARCYKDLPENAIKYLKKIEDFTETKVSIVSVGPKRDQTMMISEI</sequence>
<keyword id="KW-0963">Cytoplasm</keyword>
<keyword id="KW-0342">GTP-binding</keyword>
<keyword id="KW-0436">Ligase</keyword>
<keyword id="KW-0460">Magnesium</keyword>
<keyword id="KW-0479">Metal-binding</keyword>
<keyword id="KW-0547">Nucleotide-binding</keyword>
<keyword id="KW-0658">Purine biosynthesis</keyword>